<dbReference type="EMBL" id="AB161017">
    <property type="protein sequence ID" value="BAD32760.1"/>
    <property type="molecule type" value="Genomic_DNA"/>
</dbReference>
<dbReference type="GO" id="GO:0009507">
    <property type="term" value="C:chloroplast"/>
    <property type="evidence" value="ECO:0007669"/>
    <property type="project" value="UniProtKB-SubCell"/>
</dbReference>
<dbReference type="GO" id="GO:0003723">
    <property type="term" value="F:RNA binding"/>
    <property type="evidence" value="ECO:0007669"/>
    <property type="project" value="UniProtKB-KW"/>
</dbReference>
<dbReference type="GO" id="GO:0006397">
    <property type="term" value="P:mRNA processing"/>
    <property type="evidence" value="ECO:0007669"/>
    <property type="project" value="UniProtKB-KW"/>
</dbReference>
<dbReference type="GO" id="GO:0008380">
    <property type="term" value="P:RNA splicing"/>
    <property type="evidence" value="ECO:0007669"/>
    <property type="project" value="UniProtKB-UniRule"/>
</dbReference>
<dbReference type="GO" id="GO:0008033">
    <property type="term" value="P:tRNA processing"/>
    <property type="evidence" value="ECO:0007669"/>
    <property type="project" value="UniProtKB-KW"/>
</dbReference>
<dbReference type="HAMAP" id="MF_01390">
    <property type="entry name" value="MatK"/>
    <property type="match status" value="1"/>
</dbReference>
<dbReference type="InterPro" id="IPR024937">
    <property type="entry name" value="Domain_X"/>
</dbReference>
<dbReference type="InterPro" id="IPR002866">
    <property type="entry name" value="Maturase_MatK"/>
</dbReference>
<dbReference type="InterPro" id="IPR024942">
    <property type="entry name" value="Maturase_MatK_N"/>
</dbReference>
<dbReference type="PANTHER" id="PTHR34811">
    <property type="entry name" value="MATURASE K"/>
    <property type="match status" value="1"/>
</dbReference>
<dbReference type="PANTHER" id="PTHR34811:SF1">
    <property type="entry name" value="MATURASE K"/>
    <property type="match status" value="1"/>
</dbReference>
<dbReference type="Pfam" id="PF01348">
    <property type="entry name" value="Intron_maturas2"/>
    <property type="match status" value="1"/>
</dbReference>
<dbReference type="Pfam" id="PF01824">
    <property type="entry name" value="MatK_N"/>
    <property type="match status" value="1"/>
</dbReference>
<gene>
    <name evidence="1" type="primary">matK</name>
</gene>
<proteinExistence type="inferred from homology"/>
<reference key="1">
    <citation type="submission" date="2004-01" db="EMBL/GenBank/DDBJ databases">
        <title>Phylogeny and classification of Pinus.</title>
        <authorList>
            <person name="Gernandt D."/>
            <person name="Geada-Lopez G."/>
            <person name="Liston A."/>
        </authorList>
    </citation>
    <scope>NUCLEOTIDE SEQUENCE [GENOMIC DNA]</scope>
    <source>
        <tissue>Leaf</tissue>
    </source>
</reference>
<accession>Q6BDG8</accession>
<sequence>MDEFHRCGKEDSFWQPCFLYPLFFQEDLYAISHDHYLDVSSSSRPMEHLSSNDQLSFLTVKRLIGQIRQQNHSIVLFVNCDPNPLADRKKSFYSESVLEALTLVLEVPFSIWSKSSVEGMNECKSFRSIHSIFPFLEDKFPHSNSILDARIPYSIHPEILVRTFRRWIRDAPSLHPLRSVLYDYRNSPENLQRSIIVVPRVNTRFFLFLLNYYVWECESILFSRLKRSSHSRSLAHGSFPQRTHFHRKIKHIIIFSRRNSLKSIWSLKDPKIHYVRYGERPIIAIKGADLLVKKCRYYLLIFRQFYFHLWSEPYRVCSHQLSKNCSSSPGYFLRVRMNPLLVRTKTLDELFIPVLITNEMDPIVPIVPIIGLLATEKFCDISGRPISKLSWTSLTDDDILDRFDQIWRNLFHYYSGSFDRDGLYRIKYILLLSCAKTLACKHKSTIRVVRKELGPELFKKSFSKEREFDSLPFSSKAAARSQRERIWHSDIPQINPLANSWQKIQDLKIENLFDQ</sequence>
<keyword id="KW-0150">Chloroplast</keyword>
<keyword id="KW-0507">mRNA processing</keyword>
<keyword id="KW-0934">Plastid</keyword>
<keyword id="KW-0694">RNA-binding</keyword>
<keyword id="KW-0819">tRNA processing</keyword>
<evidence type="ECO:0000255" key="1">
    <source>
        <dbReference type="HAMAP-Rule" id="MF_01390"/>
    </source>
</evidence>
<geneLocation type="chloroplast"/>
<feature type="chain" id="PRO_0000143638" description="Maturase K">
    <location>
        <begin position="1"/>
        <end position="515"/>
    </location>
</feature>
<protein>
    <recommendedName>
        <fullName evidence="1">Maturase K</fullName>
    </recommendedName>
    <alternativeName>
        <fullName evidence="1">Intron maturase</fullName>
    </alternativeName>
</protein>
<comment type="function">
    <text evidence="1">Usually encoded in the trnK tRNA gene intron. Probably assists in splicing its own and other chloroplast group II introns.</text>
</comment>
<comment type="subcellular location">
    <subcellularLocation>
        <location>Plastid</location>
        <location>Chloroplast</location>
    </subcellularLocation>
</comment>
<comment type="similarity">
    <text evidence="1">Belongs to the intron maturase 2 family. MatK subfamily.</text>
</comment>
<organism>
    <name type="scientific">Pinus yunnanensis</name>
    <name type="common">Yunnan pine</name>
    <dbReference type="NCBI Taxonomy" id="88732"/>
    <lineage>
        <taxon>Eukaryota</taxon>
        <taxon>Viridiplantae</taxon>
        <taxon>Streptophyta</taxon>
        <taxon>Embryophyta</taxon>
        <taxon>Tracheophyta</taxon>
        <taxon>Spermatophyta</taxon>
        <taxon>Pinopsida</taxon>
        <taxon>Pinidae</taxon>
        <taxon>Conifers I</taxon>
        <taxon>Pinales</taxon>
        <taxon>Pinaceae</taxon>
        <taxon>Pinus</taxon>
        <taxon>Pinus subgen. Pinus</taxon>
    </lineage>
</organism>
<name>MATK_PINYU</name>